<name>GRCA_SHIB3</name>
<reference key="1">
    <citation type="submission" date="2008-05" db="EMBL/GenBank/DDBJ databases">
        <title>Complete sequence of Shigella boydii serotype 18 strain BS512.</title>
        <authorList>
            <person name="Rasko D.A."/>
            <person name="Rosovitz M."/>
            <person name="Maurelli A.T."/>
            <person name="Myers G."/>
            <person name="Seshadri R."/>
            <person name="Cer R."/>
            <person name="Jiang L."/>
            <person name="Ravel J."/>
            <person name="Sebastian Y."/>
        </authorList>
    </citation>
    <scope>NUCLEOTIDE SEQUENCE [LARGE SCALE GENOMIC DNA]</scope>
    <source>
        <strain>CDC 3083-94 / BS512</strain>
    </source>
</reference>
<dbReference type="EMBL" id="CP001063">
    <property type="protein sequence ID" value="ACD09614.1"/>
    <property type="molecule type" value="Genomic_DNA"/>
</dbReference>
<dbReference type="RefSeq" id="WP_000627807.1">
    <property type="nucleotide sequence ID" value="NC_010658.1"/>
</dbReference>
<dbReference type="SMR" id="B2TYK2"/>
<dbReference type="STRING" id="344609.SbBS512_E2957"/>
<dbReference type="GeneID" id="93774507"/>
<dbReference type="KEGG" id="sbc:SbBS512_E2957"/>
<dbReference type="HOGENOM" id="CLU_133780_0_0_6"/>
<dbReference type="Proteomes" id="UP000001030">
    <property type="component" value="Chromosome"/>
</dbReference>
<dbReference type="GO" id="GO:0005829">
    <property type="term" value="C:cytosol"/>
    <property type="evidence" value="ECO:0007669"/>
    <property type="project" value="TreeGrafter"/>
</dbReference>
<dbReference type="GO" id="GO:0008861">
    <property type="term" value="F:formate C-acetyltransferase activity"/>
    <property type="evidence" value="ECO:0007669"/>
    <property type="project" value="TreeGrafter"/>
</dbReference>
<dbReference type="FunFam" id="3.20.70.20:FF:000002">
    <property type="entry name" value="Autonomous glycyl radical cofactor"/>
    <property type="match status" value="1"/>
</dbReference>
<dbReference type="Gene3D" id="3.20.70.20">
    <property type="match status" value="1"/>
</dbReference>
<dbReference type="HAMAP" id="MF_00806">
    <property type="entry name" value="GrcA"/>
    <property type="match status" value="1"/>
</dbReference>
<dbReference type="InterPro" id="IPR050244">
    <property type="entry name" value="Auton_GlycylRad_Cofactor"/>
</dbReference>
<dbReference type="InterPro" id="IPR019777">
    <property type="entry name" value="Form_AcTrfase_GR_CS"/>
</dbReference>
<dbReference type="InterPro" id="IPR001150">
    <property type="entry name" value="Gly_radical"/>
</dbReference>
<dbReference type="InterPro" id="IPR011140">
    <property type="entry name" value="Glycyl_radical_cofactor_GrcA"/>
</dbReference>
<dbReference type="NCBIfam" id="TIGR04365">
    <property type="entry name" value="spare_glycyl"/>
    <property type="match status" value="1"/>
</dbReference>
<dbReference type="PANTHER" id="PTHR30191">
    <property type="entry name" value="FORMATE ACETYLTRANSFERASE"/>
    <property type="match status" value="1"/>
</dbReference>
<dbReference type="PANTHER" id="PTHR30191:SF0">
    <property type="entry name" value="FORMATE ACETYLTRANSFERASE 1"/>
    <property type="match status" value="1"/>
</dbReference>
<dbReference type="Pfam" id="PF01228">
    <property type="entry name" value="Gly_radical"/>
    <property type="match status" value="1"/>
</dbReference>
<dbReference type="PIRSF" id="PIRSF000378">
    <property type="entry name" value="Gly_radicl_yfiD"/>
    <property type="match status" value="1"/>
</dbReference>
<dbReference type="SUPFAM" id="SSF51998">
    <property type="entry name" value="PFL-like glycyl radical enzymes"/>
    <property type="match status" value="1"/>
</dbReference>
<dbReference type="PROSITE" id="PS00850">
    <property type="entry name" value="GLY_RADICAL_1"/>
    <property type="match status" value="1"/>
</dbReference>
<dbReference type="PROSITE" id="PS51149">
    <property type="entry name" value="GLY_RADICAL_2"/>
    <property type="match status" value="1"/>
</dbReference>
<keyword id="KW-0007">Acetylation</keyword>
<keyword id="KW-0556">Organic radical</keyword>
<keyword id="KW-1185">Reference proteome</keyword>
<proteinExistence type="inferred from homology"/>
<gene>
    <name evidence="1" type="primary">grcA</name>
    <name type="ordered locus">SbBS512_E2957</name>
</gene>
<evidence type="ECO:0000255" key="1">
    <source>
        <dbReference type="HAMAP-Rule" id="MF_00806"/>
    </source>
</evidence>
<feature type="chain" id="PRO_1000134001" description="Autonomous glycyl radical cofactor">
    <location>
        <begin position="1"/>
        <end position="127"/>
    </location>
</feature>
<feature type="domain" description="Glycine radical" evidence="1">
    <location>
        <begin position="5"/>
        <end position="127"/>
    </location>
</feature>
<feature type="modified residue" description="N6-acetyllysine" evidence="1">
    <location>
        <position position="48"/>
    </location>
</feature>
<feature type="modified residue" description="N6-acetyllysine" evidence="1">
    <location>
        <position position="88"/>
    </location>
</feature>
<feature type="modified residue" description="N6-acetyllysine" evidence="1">
    <location>
        <position position="92"/>
    </location>
</feature>
<feature type="modified residue" description="Glycine radical" evidence="1">
    <location>
        <position position="102"/>
    </location>
</feature>
<sequence>MITGIQITKAANDDLLNSFWLLDSEKGEARCIVAKAGYAEDEVVAVSKLGDIEYREVPVEVKPEVRVEGGQHLNVNVLRRETLEDAVKHPEKYPQLTIRVSGYAVRFNSLTPEQQRDVIARTFTESL</sequence>
<organism>
    <name type="scientific">Shigella boydii serotype 18 (strain CDC 3083-94 / BS512)</name>
    <dbReference type="NCBI Taxonomy" id="344609"/>
    <lineage>
        <taxon>Bacteria</taxon>
        <taxon>Pseudomonadati</taxon>
        <taxon>Pseudomonadota</taxon>
        <taxon>Gammaproteobacteria</taxon>
        <taxon>Enterobacterales</taxon>
        <taxon>Enterobacteriaceae</taxon>
        <taxon>Shigella</taxon>
    </lineage>
</organism>
<accession>B2TYK2</accession>
<comment type="function">
    <text evidence="1">Acts as a radical domain for damaged PFL and possibly other radical proteins.</text>
</comment>
<protein>
    <recommendedName>
        <fullName evidence="1">Autonomous glycyl radical cofactor</fullName>
    </recommendedName>
</protein>